<protein>
    <recommendedName>
        <fullName evidence="1">Lipoprotein-releasing system ATP-binding protein LolD</fullName>
        <ecNumber evidence="1">7.6.2.-</ecNumber>
    </recommendedName>
</protein>
<accession>Q3Z300</accession>
<organism>
    <name type="scientific">Shigella sonnei (strain Ss046)</name>
    <dbReference type="NCBI Taxonomy" id="300269"/>
    <lineage>
        <taxon>Bacteria</taxon>
        <taxon>Pseudomonadati</taxon>
        <taxon>Pseudomonadota</taxon>
        <taxon>Gammaproteobacteria</taxon>
        <taxon>Enterobacterales</taxon>
        <taxon>Enterobacteriaceae</taxon>
        <taxon>Shigella</taxon>
    </lineage>
</organism>
<dbReference type="EC" id="7.6.2.-" evidence="1"/>
<dbReference type="EMBL" id="CP000038">
    <property type="protein sequence ID" value="AAZ87862.1"/>
    <property type="status" value="ALT_INIT"/>
    <property type="molecule type" value="Genomic_DNA"/>
</dbReference>
<dbReference type="RefSeq" id="WP_001033695.1">
    <property type="nucleotide sequence ID" value="NC_007384.1"/>
</dbReference>
<dbReference type="SMR" id="Q3Z300"/>
<dbReference type="GeneID" id="93776291"/>
<dbReference type="KEGG" id="ssn:SSON_1137"/>
<dbReference type="HOGENOM" id="CLU_000604_1_22_6"/>
<dbReference type="Proteomes" id="UP000002529">
    <property type="component" value="Chromosome"/>
</dbReference>
<dbReference type="GO" id="GO:0005886">
    <property type="term" value="C:plasma membrane"/>
    <property type="evidence" value="ECO:0007669"/>
    <property type="project" value="UniProtKB-SubCell"/>
</dbReference>
<dbReference type="GO" id="GO:0005524">
    <property type="term" value="F:ATP binding"/>
    <property type="evidence" value="ECO:0007669"/>
    <property type="project" value="UniProtKB-KW"/>
</dbReference>
<dbReference type="GO" id="GO:0016887">
    <property type="term" value="F:ATP hydrolysis activity"/>
    <property type="evidence" value="ECO:0007669"/>
    <property type="project" value="InterPro"/>
</dbReference>
<dbReference type="GO" id="GO:0022857">
    <property type="term" value="F:transmembrane transporter activity"/>
    <property type="evidence" value="ECO:0007669"/>
    <property type="project" value="TreeGrafter"/>
</dbReference>
<dbReference type="GO" id="GO:0044874">
    <property type="term" value="P:lipoprotein localization to outer membrane"/>
    <property type="evidence" value="ECO:0007669"/>
    <property type="project" value="TreeGrafter"/>
</dbReference>
<dbReference type="GO" id="GO:0089705">
    <property type="term" value="P:protein localization to outer membrane"/>
    <property type="evidence" value="ECO:0007669"/>
    <property type="project" value="TreeGrafter"/>
</dbReference>
<dbReference type="CDD" id="cd03255">
    <property type="entry name" value="ABC_MJ0796_LolCDE_FtsE"/>
    <property type="match status" value="1"/>
</dbReference>
<dbReference type="FunFam" id="3.40.50.300:FF:000230">
    <property type="entry name" value="Lipoprotein-releasing system ATP-binding protein LolD"/>
    <property type="match status" value="1"/>
</dbReference>
<dbReference type="Gene3D" id="3.40.50.300">
    <property type="entry name" value="P-loop containing nucleotide triphosphate hydrolases"/>
    <property type="match status" value="1"/>
</dbReference>
<dbReference type="InterPro" id="IPR003593">
    <property type="entry name" value="AAA+_ATPase"/>
</dbReference>
<dbReference type="InterPro" id="IPR003439">
    <property type="entry name" value="ABC_transporter-like_ATP-bd"/>
</dbReference>
<dbReference type="InterPro" id="IPR017871">
    <property type="entry name" value="ABC_transporter-like_CS"/>
</dbReference>
<dbReference type="InterPro" id="IPR015854">
    <property type="entry name" value="ABC_transpr_LolD-like"/>
</dbReference>
<dbReference type="InterPro" id="IPR011924">
    <property type="entry name" value="LolD_lipo_ATP-bd"/>
</dbReference>
<dbReference type="InterPro" id="IPR017911">
    <property type="entry name" value="MacB-like_ATP-bd"/>
</dbReference>
<dbReference type="InterPro" id="IPR027417">
    <property type="entry name" value="P-loop_NTPase"/>
</dbReference>
<dbReference type="NCBIfam" id="TIGR02211">
    <property type="entry name" value="LolD_lipo_ex"/>
    <property type="match status" value="1"/>
</dbReference>
<dbReference type="NCBIfam" id="NF008639">
    <property type="entry name" value="PRK11629.1"/>
    <property type="match status" value="1"/>
</dbReference>
<dbReference type="PANTHER" id="PTHR24220">
    <property type="entry name" value="IMPORT ATP-BINDING PROTEIN"/>
    <property type="match status" value="1"/>
</dbReference>
<dbReference type="PANTHER" id="PTHR24220:SF689">
    <property type="entry name" value="LIPOPROTEIN-RELEASING SYSTEM ATP-BINDING PROTEIN LOLD"/>
    <property type="match status" value="1"/>
</dbReference>
<dbReference type="Pfam" id="PF00005">
    <property type="entry name" value="ABC_tran"/>
    <property type="match status" value="1"/>
</dbReference>
<dbReference type="SMART" id="SM00382">
    <property type="entry name" value="AAA"/>
    <property type="match status" value="1"/>
</dbReference>
<dbReference type="SUPFAM" id="SSF52540">
    <property type="entry name" value="P-loop containing nucleoside triphosphate hydrolases"/>
    <property type="match status" value="1"/>
</dbReference>
<dbReference type="PROSITE" id="PS00211">
    <property type="entry name" value="ABC_TRANSPORTER_1"/>
    <property type="match status" value="1"/>
</dbReference>
<dbReference type="PROSITE" id="PS50893">
    <property type="entry name" value="ABC_TRANSPORTER_2"/>
    <property type="match status" value="1"/>
</dbReference>
<dbReference type="PROSITE" id="PS51244">
    <property type="entry name" value="LOLD"/>
    <property type="match status" value="1"/>
</dbReference>
<sequence>MNKILLQCDNLCKRYQEGSVQTDVLHNVSFSVGEGEMMAIVGSSGSGKSTLLHLLGGLDTPTSGDVIFNGQPMSKLSSAAKAELRNQKLGFIYQFHHLLPDFTALENVAMPLLIGKKKPAEINSRALEMLKAVGLEHRANHRPSELSGGERQRVAIARALVNNPRLVLADEPTGNLDARNADSIFQLLGELNRLQGTAFLVVTHDLQLAKRMSRQLEMRDGRLTAELSLMGAE</sequence>
<comment type="function">
    <text evidence="1">Part of the ABC transporter complex LolCDE involved in the translocation of mature outer membrane-directed lipoproteins, from the inner membrane to the periplasmic chaperone, LolA. Responsible for the formation of the LolA-lipoprotein complex in an ATP-dependent manner.</text>
</comment>
<comment type="subunit">
    <text evidence="1">The complex is composed of two ATP-binding proteins (LolD) and two transmembrane proteins (LolC and LolE).</text>
</comment>
<comment type="subcellular location">
    <subcellularLocation>
        <location evidence="1">Cell inner membrane</location>
        <topology evidence="1">Peripheral membrane protein</topology>
    </subcellularLocation>
</comment>
<comment type="similarity">
    <text evidence="1">Belongs to the ABC transporter superfamily. Lipoprotein translocase (TC 3.A.1.125) family.</text>
</comment>
<comment type="sequence caution" evidence="2">
    <conflict type="erroneous initiation">
        <sequence resource="EMBL-CDS" id="AAZ87862"/>
    </conflict>
</comment>
<feature type="chain" id="PRO_0000272155" description="Lipoprotein-releasing system ATP-binding protein LolD">
    <location>
        <begin position="1"/>
        <end position="233"/>
    </location>
</feature>
<feature type="domain" description="ABC transporter" evidence="1">
    <location>
        <begin position="6"/>
        <end position="233"/>
    </location>
</feature>
<feature type="binding site" evidence="1">
    <location>
        <begin position="42"/>
        <end position="49"/>
    </location>
    <ligand>
        <name>ATP</name>
        <dbReference type="ChEBI" id="CHEBI:30616"/>
    </ligand>
</feature>
<evidence type="ECO:0000255" key="1">
    <source>
        <dbReference type="HAMAP-Rule" id="MF_01708"/>
    </source>
</evidence>
<evidence type="ECO:0000305" key="2"/>
<reference key="1">
    <citation type="journal article" date="2005" name="Nucleic Acids Res.">
        <title>Genome dynamics and diversity of Shigella species, the etiologic agents of bacillary dysentery.</title>
        <authorList>
            <person name="Yang F."/>
            <person name="Yang J."/>
            <person name="Zhang X."/>
            <person name="Chen L."/>
            <person name="Jiang Y."/>
            <person name="Yan Y."/>
            <person name="Tang X."/>
            <person name="Wang J."/>
            <person name="Xiong Z."/>
            <person name="Dong J."/>
            <person name="Xue Y."/>
            <person name="Zhu Y."/>
            <person name="Xu X."/>
            <person name="Sun L."/>
            <person name="Chen S."/>
            <person name="Nie H."/>
            <person name="Peng J."/>
            <person name="Xu J."/>
            <person name="Wang Y."/>
            <person name="Yuan Z."/>
            <person name="Wen Y."/>
            <person name="Yao Z."/>
            <person name="Shen Y."/>
            <person name="Qiang B."/>
            <person name="Hou Y."/>
            <person name="Yu J."/>
            <person name="Jin Q."/>
        </authorList>
    </citation>
    <scope>NUCLEOTIDE SEQUENCE [LARGE SCALE GENOMIC DNA]</scope>
    <source>
        <strain>Ss046</strain>
    </source>
</reference>
<gene>
    <name evidence="1" type="primary">lolD</name>
    <name type="ordered locus">SSON_1137</name>
</gene>
<proteinExistence type="inferred from homology"/>
<keyword id="KW-0067">ATP-binding</keyword>
<keyword id="KW-0997">Cell inner membrane</keyword>
<keyword id="KW-1003">Cell membrane</keyword>
<keyword id="KW-0472">Membrane</keyword>
<keyword id="KW-0547">Nucleotide-binding</keyword>
<keyword id="KW-1185">Reference proteome</keyword>
<keyword id="KW-1278">Translocase</keyword>
<keyword id="KW-0813">Transport</keyword>
<name>LOLD_SHISS</name>